<name>COFB_DICDI</name>
<sequence length="137" mass="15224">MSSGIALAPNCVSTFNDLKLGRKYGGIIYRISDDSKEIIVDSTLPAGCSFDEFTKCLPENECRYVVLDYQYKEEGAQKSKICFVAWCPDTANIKKKMMATSSKDSLRKACVGIQVEIQGTDASEVKDSCFYEKCTKI</sequence>
<protein>
    <recommendedName>
        <fullName>Cofilin-1B</fullName>
    </recommendedName>
</protein>
<gene>
    <name type="primary">cofB</name>
    <name type="synonym">cof2</name>
    <name type="synonym">dcof2</name>
    <name type="ORF">DDB_G0291970</name>
</gene>
<organism>
    <name type="scientific">Dictyostelium discoideum</name>
    <name type="common">Social amoeba</name>
    <dbReference type="NCBI Taxonomy" id="44689"/>
    <lineage>
        <taxon>Eukaryota</taxon>
        <taxon>Amoebozoa</taxon>
        <taxon>Evosea</taxon>
        <taxon>Eumycetozoa</taxon>
        <taxon>Dictyostelia</taxon>
        <taxon>Dictyosteliales</taxon>
        <taxon>Dictyosteliaceae</taxon>
        <taxon>Dictyostelium</taxon>
    </lineage>
</organism>
<dbReference type="EMBL" id="D37981">
    <property type="protein sequence ID" value="BAA07199.1"/>
    <property type="molecule type" value="Genomic_DNA"/>
</dbReference>
<dbReference type="EMBL" id="AAFI02000187">
    <property type="protein sequence ID" value="EAL61341.1"/>
    <property type="molecule type" value="Genomic_DNA"/>
</dbReference>
<dbReference type="RefSeq" id="XP_629776.1">
    <property type="nucleotide sequence ID" value="XM_629774.1"/>
</dbReference>
<dbReference type="SMR" id="P0DJ27"/>
<dbReference type="FunCoup" id="P0DJ27">
    <property type="interactions" value="456"/>
</dbReference>
<dbReference type="STRING" id="44689.P0DJ27"/>
<dbReference type="EnsemblProtists" id="EAL61341">
    <property type="protein sequence ID" value="EAL61341"/>
    <property type="gene ID" value="DDB_G0291970"/>
</dbReference>
<dbReference type="GeneID" id="8628452"/>
<dbReference type="KEGG" id="ddi:DDB_G0277833"/>
<dbReference type="KEGG" id="ddi:DDB_G0291970"/>
<dbReference type="dictyBase" id="DDB_G0291970">
    <property type="gene designation" value="cofB"/>
</dbReference>
<dbReference type="VEuPathDB" id="AmoebaDB:DDB_G0277833"/>
<dbReference type="HOGENOM" id="CLU_094004_3_2_1"/>
<dbReference type="InParanoid" id="P0DJ27"/>
<dbReference type="OMA" id="FKTECRY"/>
<dbReference type="PhylomeDB" id="P0DJ27"/>
<dbReference type="PRO" id="PR:P0DJ27"/>
<dbReference type="Proteomes" id="UP000002195">
    <property type="component" value="Chromosome 6"/>
</dbReference>
<dbReference type="GO" id="GO:0015629">
    <property type="term" value="C:actin cytoskeleton"/>
    <property type="evidence" value="ECO:0000318"/>
    <property type="project" value="GO_Central"/>
</dbReference>
<dbReference type="GO" id="GO:0005737">
    <property type="term" value="C:cytoplasm"/>
    <property type="evidence" value="ECO:0000318"/>
    <property type="project" value="GO_Central"/>
</dbReference>
<dbReference type="GO" id="GO:0016363">
    <property type="term" value="C:nuclear matrix"/>
    <property type="evidence" value="ECO:0007669"/>
    <property type="project" value="UniProtKB-SubCell"/>
</dbReference>
<dbReference type="GO" id="GO:0051015">
    <property type="term" value="F:actin filament binding"/>
    <property type="evidence" value="ECO:0000318"/>
    <property type="project" value="GO_Central"/>
</dbReference>
<dbReference type="GO" id="GO:0030042">
    <property type="term" value="P:actin filament depolymerization"/>
    <property type="evidence" value="ECO:0000318"/>
    <property type="project" value="GO_Central"/>
</dbReference>
<dbReference type="GO" id="GO:0051014">
    <property type="term" value="P:actin filament severing"/>
    <property type="evidence" value="ECO:0000318"/>
    <property type="project" value="GO_Central"/>
</dbReference>
<dbReference type="GO" id="GO:0009617">
    <property type="term" value="P:response to bacterium"/>
    <property type="evidence" value="ECO:0007007"/>
    <property type="project" value="dictyBase"/>
</dbReference>
<dbReference type="GO" id="GO:0030587">
    <property type="term" value="P:sorocarp development"/>
    <property type="evidence" value="ECO:0000304"/>
    <property type="project" value="dictyBase"/>
</dbReference>
<dbReference type="CDD" id="cd11286">
    <property type="entry name" value="ADF_cofilin_like"/>
    <property type="match status" value="1"/>
</dbReference>
<dbReference type="Gene3D" id="3.40.20.10">
    <property type="entry name" value="Severin"/>
    <property type="match status" value="1"/>
</dbReference>
<dbReference type="InterPro" id="IPR002108">
    <property type="entry name" value="ADF-H"/>
</dbReference>
<dbReference type="InterPro" id="IPR029006">
    <property type="entry name" value="ADF-H/Gelsolin-like_dom_sf"/>
</dbReference>
<dbReference type="InterPro" id="IPR017904">
    <property type="entry name" value="ADF/Cofilin"/>
</dbReference>
<dbReference type="PANTHER" id="PTHR11913">
    <property type="entry name" value="COFILIN-RELATED"/>
    <property type="match status" value="1"/>
</dbReference>
<dbReference type="Pfam" id="PF00241">
    <property type="entry name" value="Cofilin_ADF"/>
    <property type="match status" value="1"/>
</dbReference>
<dbReference type="PRINTS" id="PR00006">
    <property type="entry name" value="COFILIN"/>
</dbReference>
<dbReference type="SMART" id="SM00102">
    <property type="entry name" value="ADF"/>
    <property type="match status" value="1"/>
</dbReference>
<dbReference type="SUPFAM" id="SSF55753">
    <property type="entry name" value="Actin depolymerizing proteins"/>
    <property type="match status" value="1"/>
</dbReference>
<dbReference type="PROSITE" id="PS51263">
    <property type="entry name" value="ADF_H"/>
    <property type="match status" value="1"/>
</dbReference>
<proteinExistence type="evidence at protein level"/>
<evidence type="ECO:0000250" key="1"/>
<evidence type="ECO:0000255" key="2">
    <source>
        <dbReference type="PROSITE-ProRule" id="PRU00599"/>
    </source>
</evidence>
<evidence type="ECO:0000305" key="3"/>
<feature type="chain" id="PRO_0000413616" description="Cofilin-1B">
    <location>
        <begin position="1"/>
        <end position="137"/>
    </location>
</feature>
<feature type="domain" description="ADF-H" evidence="2">
    <location>
        <begin position="2"/>
        <end position="135"/>
    </location>
</feature>
<reference key="1">
    <citation type="journal article" date="1995" name="J. Biol. Chem.">
        <title>Identification, characterization, and intracellular distribution of cofilin in Dictyostelium discoideum.</title>
        <authorList>
            <person name="Aizawa H."/>
            <person name="Sutoh K."/>
            <person name="Tsubuki S."/>
            <person name="Kawashima S."/>
            <person name="Ishii A."/>
            <person name="Yahara I."/>
        </authorList>
    </citation>
    <scope>NUCLEOTIDE SEQUENCE [GENOMIC DNA]</scope>
    <source>
        <strain>AX2</strain>
    </source>
</reference>
<reference key="2">
    <citation type="journal article" date="2005" name="Nature">
        <title>The genome of the social amoeba Dictyostelium discoideum.</title>
        <authorList>
            <person name="Eichinger L."/>
            <person name="Pachebat J.A."/>
            <person name="Gloeckner G."/>
            <person name="Rajandream M.A."/>
            <person name="Sucgang R."/>
            <person name="Berriman M."/>
            <person name="Song J."/>
            <person name="Olsen R."/>
            <person name="Szafranski K."/>
            <person name="Xu Q."/>
            <person name="Tunggal B."/>
            <person name="Kummerfeld S."/>
            <person name="Madera M."/>
            <person name="Konfortov B.A."/>
            <person name="Rivero F."/>
            <person name="Bankier A.T."/>
            <person name="Lehmann R."/>
            <person name="Hamlin N."/>
            <person name="Davies R."/>
            <person name="Gaudet P."/>
            <person name="Fey P."/>
            <person name="Pilcher K."/>
            <person name="Chen G."/>
            <person name="Saunders D."/>
            <person name="Sodergren E.J."/>
            <person name="Davis P."/>
            <person name="Kerhornou A."/>
            <person name="Nie X."/>
            <person name="Hall N."/>
            <person name="Anjard C."/>
            <person name="Hemphill L."/>
            <person name="Bason N."/>
            <person name="Farbrother P."/>
            <person name="Desany B."/>
            <person name="Just E."/>
            <person name="Morio T."/>
            <person name="Rost R."/>
            <person name="Churcher C.M."/>
            <person name="Cooper J."/>
            <person name="Haydock S."/>
            <person name="van Driessche N."/>
            <person name="Cronin A."/>
            <person name="Goodhead I."/>
            <person name="Muzny D.M."/>
            <person name="Mourier T."/>
            <person name="Pain A."/>
            <person name="Lu M."/>
            <person name="Harper D."/>
            <person name="Lindsay R."/>
            <person name="Hauser H."/>
            <person name="James K.D."/>
            <person name="Quiles M."/>
            <person name="Madan Babu M."/>
            <person name="Saito T."/>
            <person name="Buchrieser C."/>
            <person name="Wardroper A."/>
            <person name="Felder M."/>
            <person name="Thangavelu M."/>
            <person name="Johnson D."/>
            <person name="Knights A."/>
            <person name="Loulseged H."/>
            <person name="Mungall K.L."/>
            <person name="Oliver K."/>
            <person name="Price C."/>
            <person name="Quail M.A."/>
            <person name="Urushihara H."/>
            <person name="Hernandez J."/>
            <person name="Rabbinowitsch E."/>
            <person name="Steffen D."/>
            <person name="Sanders M."/>
            <person name="Ma J."/>
            <person name="Kohara Y."/>
            <person name="Sharp S."/>
            <person name="Simmonds M.N."/>
            <person name="Spiegler S."/>
            <person name="Tivey A."/>
            <person name="Sugano S."/>
            <person name="White B."/>
            <person name="Walker D."/>
            <person name="Woodward J.R."/>
            <person name="Winckler T."/>
            <person name="Tanaka Y."/>
            <person name="Shaulsky G."/>
            <person name="Schleicher M."/>
            <person name="Weinstock G.M."/>
            <person name="Rosenthal A."/>
            <person name="Cox E.C."/>
            <person name="Chisholm R.L."/>
            <person name="Gibbs R.A."/>
            <person name="Loomis W.F."/>
            <person name="Platzer M."/>
            <person name="Kay R.R."/>
            <person name="Williams J.G."/>
            <person name="Dear P.H."/>
            <person name="Noegel A.A."/>
            <person name="Barrell B.G."/>
            <person name="Kuspa A."/>
        </authorList>
    </citation>
    <scope>NUCLEOTIDE SEQUENCE [LARGE SCALE GENOMIC DNA]</scope>
    <source>
        <strain>AX4</strain>
    </source>
</reference>
<reference key="3">
    <citation type="journal article" date="2006" name="Mol. Cell. Proteomics">
        <title>Proteomics fingerprinting of phagosome maturation and evidence for the role of a Galpha during uptake.</title>
        <authorList>
            <person name="Gotthardt D."/>
            <person name="Blancheteau V."/>
            <person name="Bosserhoff A."/>
            <person name="Ruppert T."/>
            <person name="Delorenzi M."/>
            <person name="Soldati T."/>
        </authorList>
    </citation>
    <scope>IDENTIFICATION BY MASS SPECTROMETRY [LARGE SCALE ANALYSIS]</scope>
    <source>
        <strain>AX2</strain>
    </source>
</reference>
<accession>P0DJ27</accession>
<accession>P54706</accession>
<accession>Q54DU6</accession>
<keyword id="KW-0009">Actin-binding</keyword>
<keyword id="KW-0963">Cytoplasm</keyword>
<keyword id="KW-0206">Cytoskeleton</keyword>
<keyword id="KW-0539">Nucleus</keyword>
<keyword id="KW-1185">Reference proteome</keyword>
<comment type="function">
    <text evidence="1">Controls reversibly actin polymerization and depolymerization in a pH-sensitive manner. It has the ability to bind G- and F-actin in a 1:1 ratio of cofilin to actin. It is the major component of intranuclear and cytoplasmic actin rods (By similarity).</text>
</comment>
<comment type="subcellular location">
    <subcellularLocation>
        <location evidence="1">Nucleus matrix</location>
    </subcellularLocation>
    <subcellularLocation>
        <location evidence="1">Cytoplasm</location>
        <location evidence="1">Cytoskeleton</location>
    </subcellularLocation>
</comment>
<comment type="similarity">
    <text evidence="3">Belongs to the actin-binding proteins ADF family.</text>
</comment>